<accession>Q9FD13</accession>
<feature type="chain" id="PRO_0000209262" description="Bifunctional glutamine synthetase adenylyltransferase/adenylyl-removing enzyme">
    <location>
        <begin position="1"/>
        <end position="963"/>
    </location>
</feature>
<feature type="region of interest" description="Adenylyl removase" evidence="1">
    <location>
        <begin position="1"/>
        <end position="453"/>
    </location>
</feature>
<feature type="region of interest" description="Adenylyl transferase" evidence="1">
    <location>
        <begin position="461"/>
        <end position="963"/>
    </location>
</feature>
<name>GLNE_MANHA</name>
<proteinExistence type="inferred from homology"/>
<keyword id="KW-0067">ATP-binding</keyword>
<keyword id="KW-0460">Magnesium</keyword>
<keyword id="KW-0511">Multifunctional enzyme</keyword>
<keyword id="KW-0547">Nucleotide-binding</keyword>
<keyword id="KW-0548">Nucleotidyltransferase</keyword>
<keyword id="KW-0808">Transferase</keyword>
<dbReference type="EC" id="2.7.7.89" evidence="1"/>
<dbReference type="EC" id="2.7.7.42" evidence="1"/>
<dbReference type="EMBL" id="AF293652">
    <property type="protein sequence ID" value="AAG02477.1"/>
    <property type="molecule type" value="Genomic_DNA"/>
</dbReference>
<dbReference type="SMR" id="Q9FD13"/>
<dbReference type="STRING" id="75985.WC39_04920"/>
<dbReference type="GO" id="GO:0005829">
    <property type="term" value="C:cytosol"/>
    <property type="evidence" value="ECO:0007669"/>
    <property type="project" value="TreeGrafter"/>
</dbReference>
<dbReference type="GO" id="GO:0008882">
    <property type="term" value="F:[glutamate-ammonia-ligase] adenylyltransferase activity"/>
    <property type="evidence" value="ECO:0007669"/>
    <property type="project" value="UniProtKB-UniRule"/>
</dbReference>
<dbReference type="GO" id="GO:0047388">
    <property type="term" value="F:[glutamine synthetase]-adenylyl-L-tyrosine phosphorylase activity"/>
    <property type="evidence" value="ECO:0007669"/>
    <property type="project" value="UniProtKB-EC"/>
</dbReference>
<dbReference type="GO" id="GO:0005524">
    <property type="term" value="F:ATP binding"/>
    <property type="evidence" value="ECO:0007669"/>
    <property type="project" value="UniProtKB-UniRule"/>
</dbReference>
<dbReference type="GO" id="GO:0000287">
    <property type="term" value="F:magnesium ion binding"/>
    <property type="evidence" value="ECO:0007669"/>
    <property type="project" value="UniProtKB-UniRule"/>
</dbReference>
<dbReference type="GO" id="GO:0000820">
    <property type="term" value="P:regulation of glutamine family amino acid metabolic process"/>
    <property type="evidence" value="ECO:0007669"/>
    <property type="project" value="UniProtKB-UniRule"/>
</dbReference>
<dbReference type="CDD" id="cd05401">
    <property type="entry name" value="NT_GlnE_GlnD_like"/>
    <property type="match status" value="2"/>
</dbReference>
<dbReference type="FunFam" id="1.20.120.330:FF:000005">
    <property type="entry name" value="Bifunctional glutamine synthetase adenylyltransferase/adenylyl-removing enzyme"/>
    <property type="match status" value="1"/>
</dbReference>
<dbReference type="FunFam" id="3.30.460.10:FF:000009">
    <property type="entry name" value="Bifunctional glutamine synthetase adenylyltransferase/adenylyl-removing enzyme"/>
    <property type="match status" value="1"/>
</dbReference>
<dbReference type="FunFam" id="3.30.460.10:FF:000014">
    <property type="entry name" value="Bifunctional glutamine synthetase adenylyltransferase/adenylyl-removing enzyme"/>
    <property type="match status" value="1"/>
</dbReference>
<dbReference type="Gene3D" id="1.20.120.1510">
    <property type="match status" value="1"/>
</dbReference>
<dbReference type="Gene3D" id="3.30.460.10">
    <property type="entry name" value="Beta Polymerase, domain 2"/>
    <property type="match status" value="2"/>
</dbReference>
<dbReference type="Gene3D" id="1.10.4050.10">
    <property type="entry name" value="Glutamine synthase adenylyltransferase GlnE"/>
    <property type="match status" value="1"/>
</dbReference>
<dbReference type="Gene3D" id="1.20.120.330">
    <property type="entry name" value="Nucleotidyltransferases domain 2"/>
    <property type="match status" value="2"/>
</dbReference>
<dbReference type="HAMAP" id="MF_00802">
    <property type="entry name" value="GlnE"/>
    <property type="match status" value="1"/>
</dbReference>
<dbReference type="InterPro" id="IPR023057">
    <property type="entry name" value="GlnE"/>
</dbReference>
<dbReference type="InterPro" id="IPR005190">
    <property type="entry name" value="GlnE_rpt_dom"/>
</dbReference>
<dbReference type="InterPro" id="IPR043519">
    <property type="entry name" value="NT_sf"/>
</dbReference>
<dbReference type="InterPro" id="IPR013546">
    <property type="entry name" value="PII_UdlTrfase/GS_AdlTrfase"/>
</dbReference>
<dbReference type="NCBIfam" id="NF008292">
    <property type="entry name" value="PRK11072.1"/>
    <property type="match status" value="1"/>
</dbReference>
<dbReference type="PANTHER" id="PTHR30621:SF0">
    <property type="entry name" value="BIFUNCTIONAL GLUTAMINE SYNTHETASE ADENYLYLTRANSFERASE_ADENYLYL-REMOVING ENZYME"/>
    <property type="match status" value="1"/>
</dbReference>
<dbReference type="PANTHER" id="PTHR30621">
    <property type="entry name" value="GLUTAMINE SYNTHETASE ADENYLYLTRANSFERASE"/>
    <property type="match status" value="1"/>
</dbReference>
<dbReference type="Pfam" id="PF08335">
    <property type="entry name" value="GlnD_UR_UTase"/>
    <property type="match status" value="2"/>
</dbReference>
<dbReference type="Pfam" id="PF03710">
    <property type="entry name" value="GlnE"/>
    <property type="match status" value="2"/>
</dbReference>
<dbReference type="SUPFAM" id="SSF81301">
    <property type="entry name" value="Nucleotidyltransferase"/>
    <property type="match status" value="2"/>
</dbReference>
<dbReference type="SUPFAM" id="SSF81593">
    <property type="entry name" value="Nucleotidyltransferase substrate binding subunit/domain"/>
    <property type="match status" value="2"/>
</dbReference>
<comment type="function">
    <text evidence="1">Involved in the regulation of glutamine synthetase GlnA, a key enzyme in the process to assimilate ammonia. When cellular nitrogen levels are high, the C-terminal adenylyl transferase (AT) inactivates GlnA by covalent transfer of an adenylyl group from ATP to specific tyrosine residue of GlnA, thus reducing its activity. Conversely, when nitrogen levels are low, the N-terminal adenylyl removase (AR) activates GlnA by removing the adenylyl group by phosphorolysis, increasing its activity. The regulatory region of GlnE binds the signal transduction protein PII (GlnB) which indicates the nitrogen status of the cell.</text>
</comment>
<comment type="catalytic activity">
    <reaction evidence="1">
        <text>[glutamine synthetase]-O(4)-(5'-adenylyl)-L-tyrosine + phosphate = [glutamine synthetase]-L-tyrosine + ADP</text>
        <dbReference type="Rhea" id="RHEA:43716"/>
        <dbReference type="Rhea" id="RHEA-COMP:10660"/>
        <dbReference type="Rhea" id="RHEA-COMP:10661"/>
        <dbReference type="ChEBI" id="CHEBI:43474"/>
        <dbReference type="ChEBI" id="CHEBI:46858"/>
        <dbReference type="ChEBI" id="CHEBI:83624"/>
        <dbReference type="ChEBI" id="CHEBI:456216"/>
        <dbReference type="EC" id="2.7.7.89"/>
    </reaction>
</comment>
<comment type="catalytic activity">
    <reaction evidence="1">
        <text>[glutamine synthetase]-L-tyrosine + ATP = [glutamine synthetase]-O(4)-(5'-adenylyl)-L-tyrosine + diphosphate</text>
        <dbReference type="Rhea" id="RHEA:18589"/>
        <dbReference type="Rhea" id="RHEA-COMP:10660"/>
        <dbReference type="Rhea" id="RHEA-COMP:10661"/>
        <dbReference type="ChEBI" id="CHEBI:30616"/>
        <dbReference type="ChEBI" id="CHEBI:33019"/>
        <dbReference type="ChEBI" id="CHEBI:46858"/>
        <dbReference type="ChEBI" id="CHEBI:83624"/>
        <dbReference type="EC" id="2.7.7.42"/>
    </reaction>
</comment>
<comment type="cofactor">
    <cofactor evidence="1">
        <name>Mg(2+)</name>
        <dbReference type="ChEBI" id="CHEBI:18420"/>
    </cofactor>
</comment>
<comment type="similarity">
    <text evidence="1">Belongs to the GlnE family.</text>
</comment>
<evidence type="ECO:0000255" key="1">
    <source>
        <dbReference type="HAMAP-Rule" id="MF_00802"/>
    </source>
</evidence>
<reference key="1">
    <citation type="submission" date="2000-08" db="EMBL/GenBank/DDBJ databases">
        <title>Mannheimia haemolytica glutamine synthetase adenylyltransferase.</title>
        <authorList>
            <person name="Highlander S.K."/>
        </authorList>
    </citation>
    <scope>NUCLEOTIDE SEQUENCE [GENOMIC DNA]</scope>
</reference>
<protein>
    <recommendedName>
        <fullName evidence="1">Bifunctional glutamine synthetase adenylyltransferase/adenylyl-removing enzyme</fullName>
    </recommendedName>
    <alternativeName>
        <fullName evidence="1">ATP:glutamine synthetase adenylyltransferase</fullName>
    </alternativeName>
    <alternativeName>
        <fullName evidence="1">ATase</fullName>
    </alternativeName>
    <domain>
        <recommendedName>
            <fullName evidence="1">Glutamine synthetase adenylyl-L-tyrosine phosphorylase</fullName>
            <ecNumber evidence="1">2.7.7.89</ecNumber>
        </recommendedName>
        <alternativeName>
            <fullName evidence="1">Adenylyl removase</fullName>
            <shortName evidence="1">AR</shortName>
            <shortName evidence="1">AT-N</shortName>
        </alternativeName>
    </domain>
    <domain>
        <recommendedName>
            <fullName evidence="1">Glutamine synthetase adenylyl transferase</fullName>
            <ecNumber evidence="1">2.7.7.42</ecNumber>
        </recommendedName>
        <alternativeName>
            <fullName evidence="1">Adenylyl transferase</fullName>
            <shortName evidence="1">AT</shortName>
            <shortName evidence="1">AT-C</shortName>
        </alternativeName>
    </domain>
</protein>
<organism>
    <name type="scientific">Mannheimia haemolytica</name>
    <name type="common">Pasteurella haemolytica</name>
    <dbReference type="NCBI Taxonomy" id="75985"/>
    <lineage>
        <taxon>Bacteria</taxon>
        <taxon>Pseudomonadati</taxon>
        <taxon>Pseudomonadota</taxon>
        <taxon>Gammaproteobacteria</taxon>
        <taxon>Pasteurellales</taxon>
        <taxon>Pasteurellaceae</taxon>
        <taxon>Mannheimia</taxon>
    </lineage>
</organism>
<sequence length="963" mass="111282">MLTTLIPLSQLNLPPNLQNSEQIQPLVTAEFASNFVHQTLQKQPDLLAEWLAKFPTPDDCCNYTERLAKILARVPNEEMLGRVLRQFRHRELARLSFIQSNKLATVELVFQHLSDLAESLILAARDWLFQRCCAEYGTPKNTLGETQELLILGMGKLGGRELNFSSDIDLIFTYPDIGETEGGRKSIENSKFFTRMAQRLIKVLDEITADGFVYRTDMRLRPFGDSGRLVLSFTAMEDYYQEQGRDWERYAMIKAKILGEDSQNLNHRYLKQMLRPFVYRRYLDFSAIQSLREMKEKISREVVRRNLTDNIKFGAGGIREVEFIAQTFQMIRGGRDKILQERSLLKVLPRLAELNLLTQTQVETLHNAYIFYRQIENVLQAIDDKQTQTLPTDEASQARLVFACQSYYQQDLYSEKTHWVEHSFNDWQQFMAVLSQYQQAVRQIFNEIIGEEETQANCNPVNEKLAEWKDILHYNIRLEDLSAVLKGYPKVAENDYTEIFRHFSTTFQDWVKRPIGVRGREVLRNLMPRIADSIFKGEDHLLLLPRVLNIVDKITTRTTYLELMLEKEQILPQLLALCSKSVMIAEQIARYPMLLDELMSHRGLTDVQAFEKYQSALQDYLIRIPEEDEEALIDGLRQFKQTQILRIAAADILGVLLVMKISDHLTYLAEAIINAVVNMAWKQVSQRFGVPEHLEADEKGFAVIGYGKLGGIELGYNSDLDLVFLHNAPEDSQTVGGKKEISSHQFYLKLAQKINSIFNLNTSAGVLYEVDMRLRPSGEAGLLVSTFNAYEHYQKNEAWTWESQALVRTRCVFGAENLKQAFEKIRQSTLAQPRASGQLRQEICEMRQKMYQHLSSHSAEQFHIKQDQGGITDIEFIAQYLVLAHSHQHPKMAVWSDNVRIFDSAVECGILSSEQSEQLQHCYTALRNKIHHLKLLRKDSVVDASEFTTERAFVREMWQRLLA</sequence>
<gene>
    <name evidence="1" type="primary">glnE</name>
</gene>